<reference key="1">
    <citation type="journal article" date="2013" name="Plant Physiol.">
        <title>A Nostoc punctiforme Sugar Transporter Necessary to Establish a Cyanobacterium-Plant Symbiosis.</title>
        <authorList>
            <person name="Ekman M."/>
            <person name="Picossi S."/>
            <person name="Campbell E.L."/>
            <person name="Meeks J.C."/>
            <person name="Flores E."/>
        </authorList>
    </citation>
    <scope>NUCLEOTIDE SEQUENCE [LARGE SCALE GENOMIC DNA]</scope>
    <source>
        <strain>ATCC 29133 / PCC 73102</strain>
    </source>
</reference>
<dbReference type="EMBL" id="CP001037">
    <property type="protein sequence ID" value="ACC84149.1"/>
    <property type="molecule type" value="Genomic_DNA"/>
</dbReference>
<dbReference type="RefSeq" id="WP_012412092.1">
    <property type="nucleotide sequence ID" value="NC_010628.1"/>
</dbReference>
<dbReference type="SMR" id="B2JA74"/>
<dbReference type="STRING" id="63737.Npun_F5851"/>
<dbReference type="EnsemblBacteria" id="ACC84149">
    <property type="protein sequence ID" value="ACC84149"/>
    <property type="gene ID" value="Npun_F5851"/>
</dbReference>
<dbReference type="KEGG" id="npu:Npun_F5851"/>
<dbReference type="eggNOG" id="COG0080">
    <property type="taxonomic scope" value="Bacteria"/>
</dbReference>
<dbReference type="HOGENOM" id="CLU_074237_2_2_3"/>
<dbReference type="OrthoDB" id="9802408at2"/>
<dbReference type="PhylomeDB" id="B2JA74"/>
<dbReference type="Proteomes" id="UP000001191">
    <property type="component" value="Chromosome"/>
</dbReference>
<dbReference type="GO" id="GO:0022625">
    <property type="term" value="C:cytosolic large ribosomal subunit"/>
    <property type="evidence" value="ECO:0007669"/>
    <property type="project" value="TreeGrafter"/>
</dbReference>
<dbReference type="GO" id="GO:0070180">
    <property type="term" value="F:large ribosomal subunit rRNA binding"/>
    <property type="evidence" value="ECO:0007669"/>
    <property type="project" value="UniProtKB-UniRule"/>
</dbReference>
<dbReference type="GO" id="GO:0003735">
    <property type="term" value="F:structural constituent of ribosome"/>
    <property type="evidence" value="ECO:0007669"/>
    <property type="project" value="InterPro"/>
</dbReference>
<dbReference type="GO" id="GO:0006412">
    <property type="term" value="P:translation"/>
    <property type="evidence" value="ECO:0007669"/>
    <property type="project" value="UniProtKB-UniRule"/>
</dbReference>
<dbReference type="CDD" id="cd00349">
    <property type="entry name" value="Ribosomal_L11"/>
    <property type="match status" value="1"/>
</dbReference>
<dbReference type="FunFam" id="1.10.10.250:FF:000001">
    <property type="entry name" value="50S ribosomal protein L11"/>
    <property type="match status" value="1"/>
</dbReference>
<dbReference type="FunFam" id="3.30.1550.10:FF:000001">
    <property type="entry name" value="50S ribosomal protein L11"/>
    <property type="match status" value="1"/>
</dbReference>
<dbReference type="Gene3D" id="1.10.10.250">
    <property type="entry name" value="Ribosomal protein L11, C-terminal domain"/>
    <property type="match status" value="1"/>
</dbReference>
<dbReference type="Gene3D" id="3.30.1550.10">
    <property type="entry name" value="Ribosomal protein L11/L12, N-terminal domain"/>
    <property type="match status" value="1"/>
</dbReference>
<dbReference type="HAMAP" id="MF_00736">
    <property type="entry name" value="Ribosomal_uL11"/>
    <property type="match status" value="1"/>
</dbReference>
<dbReference type="InterPro" id="IPR000911">
    <property type="entry name" value="Ribosomal_uL11"/>
</dbReference>
<dbReference type="InterPro" id="IPR006519">
    <property type="entry name" value="Ribosomal_uL11_bac-typ"/>
</dbReference>
<dbReference type="InterPro" id="IPR020783">
    <property type="entry name" value="Ribosomal_uL11_C"/>
</dbReference>
<dbReference type="InterPro" id="IPR036769">
    <property type="entry name" value="Ribosomal_uL11_C_sf"/>
</dbReference>
<dbReference type="InterPro" id="IPR020785">
    <property type="entry name" value="Ribosomal_uL11_CS"/>
</dbReference>
<dbReference type="InterPro" id="IPR020784">
    <property type="entry name" value="Ribosomal_uL11_N"/>
</dbReference>
<dbReference type="InterPro" id="IPR036796">
    <property type="entry name" value="Ribosomal_uL11_N_sf"/>
</dbReference>
<dbReference type="NCBIfam" id="TIGR01632">
    <property type="entry name" value="L11_bact"/>
    <property type="match status" value="1"/>
</dbReference>
<dbReference type="PANTHER" id="PTHR11661">
    <property type="entry name" value="60S RIBOSOMAL PROTEIN L12"/>
    <property type="match status" value="1"/>
</dbReference>
<dbReference type="PANTHER" id="PTHR11661:SF1">
    <property type="entry name" value="LARGE RIBOSOMAL SUBUNIT PROTEIN UL11M"/>
    <property type="match status" value="1"/>
</dbReference>
<dbReference type="Pfam" id="PF00298">
    <property type="entry name" value="Ribosomal_L11"/>
    <property type="match status" value="1"/>
</dbReference>
<dbReference type="Pfam" id="PF03946">
    <property type="entry name" value="Ribosomal_L11_N"/>
    <property type="match status" value="1"/>
</dbReference>
<dbReference type="SMART" id="SM00649">
    <property type="entry name" value="RL11"/>
    <property type="match status" value="1"/>
</dbReference>
<dbReference type="SUPFAM" id="SSF54747">
    <property type="entry name" value="Ribosomal L11/L12e N-terminal domain"/>
    <property type="match status" value="1"/>
</dbReference>
<dbReference type="SUPFAM" id="SSF46906">
    <property type="entry name" value="Ribosomal protein L11, C-terminal domain"/>
    <property type="match status" value="1"/>
</dbReference>
<dbReference type="PROSITE" id="PS00359">
    <property type="entry name" value="RIBOSOMAL_L11"/>
    <property type="match status" value="1"/>
</dbReference>
<evidence type="ECO:0000255" key="1">
    <source>
        <dbReference type="HAMAP-Rule" id="MF_00736"/>
    </source>
</evidence>
<evidence type="ECO:0000305" key="2"/>
<organism>
    <name type="scientific">Nostoc punctiforme (strain ATCC 29133 / PCC 73102)</name>
    <dbReference type="NCBI Taxonomy" id="63737"/>
    <lineage>
        <taxon>Bacteria</taxon>
        <taxon>Bacillati</taxon>
        <taxon>Cyanobacteriota</taxon>
        <taxon>Cyanophyceae</taxon>
        <taxon>Nostocales</taxon>
        <taxon>Nostocaceae</taxon>
        <taxon>Nostoc</taxon>
    </lineage>
</organism>
<name>RL11_NOSP7</name>
<sequence>MAKKVVAVIKLALNAGKANPAPPVGPALGQHGVNIMMFCKEYNAKTADQAGMVIPVEISVFEDRSFTFVLKTPPASVLIRKAAKVEKGSNEPNKKKVGSITKAQLQEIAQTKLPDLNANDIDAAMKIVAGTAKNMGITVKD</sequence>
<accession>B2JA74</accession>
<gene>
    <name evidence="1" type="primary">rplK</name>
    <name evidence="1" type="synonym">rpl11</name>
    <name type="ordered locus">Npun_F5851</name>
</gene>
<protein>
    <recommendedName>
        <fullName evidence="1">Large ribosomal subunit protein uL11</fullName>
    </recommendedName>
    <alternativeName>
        <fullName evidence="2">50S ribosomal protein L11</fullName>
    </alternativeName>
</protein>
<feature type="chain" id="PRO_1000195681" description="Large ribosomal subunit protein uL11">
    <location>
        <begin position="1"/>
        <end position="141"/>
    </location>
</feature>
<keyword id="KW-0488">Methylation</keyword>
<keyword id="KW-1185">Reference proteome</keyword>
<keyword id="KW-0687">Ribonucleoprotein</keyword>
<keyword id="KW-0689">Ribosomal protein</keyword>
<keyword id="KW-0694">RNA-binding</keyword>
<keyword id="KW-0699">rRNA-binding</keyword>
<proteinExistence type="inferred from homology"/>
<comment type="function">
    <text evidence="1">Forms part of the ribosomal stalk which helps the ribosome interact with GTP-bound translation factors.</text>
</comment>
<comment type="subunit">
    <text evidence="1">Part of the ribosomal stalk of the 50S ribosomal subunit. Interacts with L10 and the large rRNA to form the base of the stalk. L10 forms an elongated spine to which L12 dimers bind in a sequential fashion forming a multimeric L10(L12)X complex.</text>
</comment>
<comment type="PTM">
    <text evidence="1">One or more lysine residues are methylated.</text>
</comment>
<comment type="similarity">
    <text evidence="1">Belongs to the universal ribosomal protein uL11 family.</text>
</comment>